<proteinExistence type="evidence at transcript level"/>
<sequence length="362" mass="39732">MGIYLSTPKTDKFSEDGENDKLKLGLSSMQGWRANMEDAHSALLNLDNETSFFGVFDGHGGRVVAKFCAKYLHSQVLRSEAYSAGDLGTAVHRAFFRMDEMMRGQRGWRELSALGDKINKIGGMIEGLIWSPRGSDSNNGQDDWSFEEGPHSDFAGPTCGCTACVALIRNNQLVVANAGDSRCVISRAGQAYNLSRDHKPELEAERDRIVKAGGFIHMGRINGSLNLTRAIGDMEFKQNKFLPPEKQIVTANPDINVVELCDDDDFLVLACDGIWDCMSSQQLVDFIHEHIQKESSLSAVCERVLDRCLAPSTIGGEGCDNMTMVLVQFKKPITQNKKADVGEQSVKGVEEAEINAAEENGS</sequence>
<reference key="1">
    <citation type="journal article" date="2005" name="Nature">
        <title>The map-based sequence of the rice genome.</title>
        <authorList>
            <consortium name="International rice genome sequencing project (IRGSP)"/>
        </authorList>
    </citation>
    <scope>NUCLEOTIDE SEQUENCE [LARGE SCALE GENOMIC DNA]</scope>
    <source>
        <strain>cv. Nipponbare</strain>
    </source>
</reference>
<reference key="2">
    <citation type="journal article" date="2008" name="Nucleic Acids Res.">
        <title>The rice annotation project database (RAP-DB): 2008 update.</title>
        <authorList>
            <consortium name="The rice annotation project (RAP)"/>
        </authorList>
    </citation>
    <scope>GENOME REANNOTATION</scope>
    <source>
        <strain>cv. Nipponbare</strain>
    </source>
</reference>
<reference key="3">
    <citation type="journal article" date="2013" name="Rice">
        <title>Improvement of the Oryza sativa Nipponbare reference genome using next generation sequence and optical map data.</title>
        <authorList>
            <person name="Kawahara Y."/>
            <person name="de la Bastide M."/>
            <person name="Hamilton J.P."/>
            <person name="Kanamori H."/>
            <person name="McCombie W.R."/>
            <person name="Ouyang S."/>
            <person name="Schwartz D.C."/>
            <person name="Tanaka T."/>
            <person name="Wu J."/>
            <person name="Zhou S."/>
            <person name="Childs K.L."/>
            <person name="Davidson R.M."/>
            <person name="Lin H."/>
            <person name="Quesada-Ocampo L."/>
            <person name="Vaillancourt B."/>
            <person name="Sakai H."/>
            <person name="Lee S.S."/>
            <person name="Kim J."/>
            <person name="Numa H."/>
            <person name="Itoh T."/>
            <person name="Buell C.R."/>
            <person name="Matsumoto T."/>
        </authorList>
    </citation>
    <scope>GENOME REANNOTATION</scope>
    <source>
        <strain>cv. Nipponbare</strain>
    </source>
</reference>
<reference key="4">
    <citation type="journal article" date="2003" name="Science">
        <title>Collection, mapping, and annotation of over 28,000 cDNA clones from japonica rice.</title>
        <authorList>
            <consortium name="The rice full-length cDNA consortium"/>
        </authorList>
    </citation>
    <scope>NUCLEOTIDE SEQUENCE [LARGE SCALE MRNA]</scope>
    <source>
        <strain>cv. Nipponbare</strain>
    </source>
</reference>
<reference key="5">
    <citation type="journal article" date="2008" name="BMC Genomics">
        <title>Genome-wide and expression analysis of protein phosphatase 2C in rice and Arabidopsis.</title>
        <authorList>
            <person name="Xue T."/>
            <person name="Wang D."/>
            <person name="Zhang S."/>
            <person name="Ehlting J."/>
            <person name="Ni F."/>
            <person name="Jacab S."/>
            <person name="Zheng C."/>
            <person name="Zhong Y."/>
        </authorList>
    </citation>
    <scope>GENE FAMILY</scope>
    <scope>NOMENCLATURE</scope>
</reference>
<keyword id="KW-0378">Hydrolase</keyword>
<keyword id="KW-0460">Magnesium</keyword>
<keyword id="KW-0464">Manganese</keyword>
<keyword id="KW-0479">Metal-binding</keyword>
<keyword id="KW-0904">Protein phosphatase</keyword>
<keyword id="KW-1185">Reference proteome</keyword>
<name>P2C11_ORYSJ</name>
<feature type="chain" id="PRO_0000363257" description="Probable protein phosphatase 2C 11">
    <location>
        <begin position="1"/>
        <end position="362"/>
    </location>
</feature>
<feature type="domain" description="PPM-type phosphatase" evidence="2">
    <location>
        <begin position="23"/>
        <end position="329"/>
    </location>
</feature>
<feature type="binding site" evidence="1">
    <location>
        <position position="57"/>
    </location>
    <ligand>
        <name>Mn(2+)</name>
        <dbReference type="ChEBI" id="CHEBI:29035"/>
        <label>1</label>
    </ligand>
</feature>
<feature type="binding site" evidence="1">
    <location>
        <position position="57"/>
    </location>
    <ligand>
        <name>Mn(2+)</name>
        <dbReference type="ChEBI" id="CHEBI:29035"/>
        <label>2</label>
    </ligand>
</feature>
<feature type="binding site" evidence="1">
    <location>
        <position position="58"/>
    </location>
    <ligand>
        <name>Mn(2+)</name>
        <dbReference type="ChEBI" id="CHEBI:29035"/>
        <label>1</label>
    </ligand>
</feature>
<feature type="binding site" evidence="1">
    <location>
        <position position="272"/>
    </location>
    <ligand>
        <name>Mn(2+)</name>
        <dbReference type="ChEBI" id="CHEBI:29035"/>
        <label>2</label>
    </ligand>
</feature>
<feature type="binding site" evidence="1">
    <location>
        <position position="320"/>
    </location>
    <ligand>
        <name>Mn(2+)</name>
        <dbReference type="ChEBI" id="CHEBI:29035"/>
        <label>2</label>
    </ligand>
</feature>
<feature type="sequence conflict" description="In Ref. 4; AK120521." evidence="3" ref="4">
    <original>M</original>
    <variation>K</variation>
    <location>
        <position position="36"/>
    </location>
</feature>
<feature type="sequence conflict" description="In Ref. 4; AK120521." evidence="3" ref="4">
    <original>F</original>
    <variation>L</variation>
    <location>
        <position position="53"/>
    </location>
</feature>
<feature type="sequence conflict" description="In Ref. 4; AK120521." evidence="3" ref="4">
    <original>H</original>
    <variation>R</variation>
    <location>
        <position position="73"/>
    </location>
</feature>
<protein>
    <recommendedName>
        <fullName>Probable protein phosphatase 2C 11</fullName>
        <shortName>OsPP2C11</shortName>
        <ecNumber>3.1.3.16</ecNumber>
    </recommendedName>
</protein>
<organism>
    <name type="scientific">Oryza sativa subsp. japonica</name>
    <name type="common">Rice</name>
    <dbReference type="NCBI Taxonomy" id="39947"/>
    <lineage>
        <taxon>Eukaryota</taxon>
        <taxon>Viridiplantae</taxon>
        <taxon>Streptophyta</taxon>
        <taxon>Embryophyta</taxon>
        <taxon>Tracheophyta</taxon>
        <taxon>Spermatophyta</taxon>
        <taxon>Magnoliopsida</taxon>
        <taxon>Liliopsida</taxon>
        <taxon>Poales</taxon>
        <taxon>Poaceae</taxon>
        <taxon>BOP clade</taxon>
        <taxon>Oryzoideae</taxon>
        <taxon>Oryzeae</taxon>
        <taxon>Oryzinae</taxon>
        <taxon>Oryza</taxon>
        <taxon>Oryza sativa</taxon>
    </lineage>
</organism>
<accession>Q6ETK3</accession>
<accession>A0A0P0VFE8</accession>
<gene>
    <name type="ordered locus">Os02g0180000</name>
    <name type="ordered locus">LOC_Os02g08364</name>
    <name type="ORF">P0544B02.31</name>
</gene>
<comment type="catalytic activity">
    <reaction>
        <text>O-phospho-L-seryl-[protein] + H2O = L-seryl-[protein] + phosphate</text>
        <dbReference type="Rhea" id="RHEA:20629"/>
        <dbReference type="Rhea" id="RHEA-COMP:9863"/>
        <dbReference type="Rhea" id="RHEA-COMP:11604"/>
        <dbReference type="ChEBI" id="CHEBI:15377"/>
        <dbReference type="ChEBI" id="CHEBI:29999"/>
        <dbReference type="ChEBI" id="CHEBI:43474"/>
        <dbReference type="ChEBI" id="CHEBI:83421"/>
        <dbReference type="EC" id="3.1.3.16"/>
    </reaction>
</comment>
<comment type="catalytic activity">
    <reaction>
        <text>O-phospho-L-threonyl-[protein] + H2O = L-threonyl-[protein] + phosphate</text>
        <dbReference type="Rhea" id="RHEA:47004"/>
        <dbReference type="Rhea" id="RHEA-COMP:11060"/>
        <dbReference type="Rhea" id="RHEA-COMP:11605"/>
        <dbReference type="ChEBI" id="CHEBI:15377"/>
        <dbReference type="ChEBI" id="CHEBI:30013"/>
        <dbReference type="ChEBI" id="CHEBI:43474"/>
        <dbReference type="ChEBI" id="CHEBI:61977"/>
        <dbReference type="EC" id="3.1.3.16"/>
    </reaction>
</comment>
<comment type="cofactor">
    <cofactor evidence="1">
        <name>Mg(2+)</name>
        <dbReference type="ChEBI" id="CHEBI:18420"/>
    </cofactor>
    <cofactor evidence="1">
        <name>Mn(2+)</name>
        <dbReference type="ChEBI" id="CHEBI:29035"/>
    </cofactor>
    <text evidence="1">Binds 2 magnesium or manganese ions per subunit.</text>
</comment>
<comment type="similarity">
    <text evidence="3">Belongs to the PP2C family.</text>
</comment>
<comment type="sequence caution" evidence="3">
    <conflict type="frameshift">
        <sequence resource="EMBL" id="AK120521"/>
    </conflict>
</comment>
<evidence type="ECO:0000250" key="1"/>
<evidence type="ECO:0000255" key="2">
    <source>
        <dbReference type="PROSITE-ProRule" id="PRU01082"/>
    </source>
</evidence>
<evidence type="ECO:0000305" key="3"/>
<dbReference type="EC" id="3.1.3.16"/>
<dbReference type="EMBL" id="AP004840">
    <property type="protein sequence ID" value="BAD28017.1"/>
    <property type="molecule type" value="Genomic_DNA"/>
</dbReference>
<dbReference type="EMBL" id="AP008208">
    <property type="protein sequence ID" value="BAF08002.1"/>
    <property type="molecule type" value="Genomic_DNA"/>
</dbReference>
<dbReference type="EMBL" id="AP014958">
    <property type="protein sequence ID" value="BAS77298.1"/>
    <property type="molecule type" value="Genomic_DNA"/>
</dbReference>
<dbReference type="EMBL" id="AK120521">
    <property type="status" value="NOT_ANNOTATED_CDS"/>
    <property type="molecule type" value="mRNA"/>
</dbReference>
<dbReference type="RefSeq" id="XP_015626405.1">
    <property type="nucleotide sequence ID" value="XM_015770919.1"/>
</dbReference>
<dbReference type="SMR" id="Q6ETK3"/>
<dbReference type="FunCoup" id="Q6ETK3">
    <property type="interactions" value="3427"/>
</dbReference>
<dbReference type="STRING" id="39947.Q6ETK3"/>
<dbReference type="PaxDb" id="39947-Q6ETK3"/>
<dbReference type="EnsemblPlants" id="Os02t0180000-01">
    <property type="protein sequence ID" value="Os02t0180000-01"/>
    <property type="gene ID" value="Os02g0180000"/>
</dbReference>
<dbReference type="Gramene" id="Os02t0180000-01">
    <property type="protein sequence ID" value="Os02t0180000-01"/>
    <property type="gene ID" value="Os02g0180000"/>
</dbReference>
<dbReference type="KEGG" id="dosa:Os02g0180000"/>
<dbReference type="KEGG" id="osa:4328505"/>
<dbReference type="eggNOG" id="KOG0698">
    <property type="taxonomic scope" value="Eukaryota"/>
</dbReference>
<dbReference type="HOGENOM" id="CLU_013173_4_1_1"/>
<dbReference type="InParanoid" id="Q6ETK3"/>
<dbReference type="OMA" id="GPGIRNQ"/>
<dbReference type="OrthoDB" id="10264738at2759"/>
<dbReference type="Proteomes" id="UP000000763">
    <property type="component" value="Chromosome 2"/>
</dbReference>
<dbReference type="Proteomes" id="UP000059680">
    <property type="component" value="Chromosome 2"/>
</dbReference>
<dbReference type="GO" id="GO:0046872">
    <property type="term" value="F:metal ion binding"/>
    <property type="evidence" value="ECO:0007669"/>
    <property type="project" value="UniProtKB-KW"/>
</dbReference>
<dbReference type="GO" id="GO:0004722">
    <property type="term" value="F:protein serine/threonine phosphatase activity"/>
    <property type="evidence" value="ECO:0007669"/>
    <property type="project" value="UniProtKB-EC"/>
</dbReference>
<dbReference type="GO" id="GO:0007165">
    <property type="term" value="P:signal transduction"/>
    <property type="evidence" value="ECO:0000318"/>
    <property type="project" value="GO_Central"/>
</dbReference>
<dbReference type="CDD" id="cd00143">
    <property type="entry name" value="PP2Cc"/>
    <property type="match status" value="1"/>
</dbReference>
<dbReference type="Gene3D" id="3.60.40.10">
    <property type="entry name" value="PPM-type phosphatase domain"/>
    <property type="match status" value="1"/>
</dbReference>
<dbReference type="InterPro" id="IPR015655">
    <property type="entry name" value="PP2C"/>
</dbReference>
<dbReference type="InterPro" id="IPR000222">
    <property type="entry name" value="PP2C_BS"/>
</dbReference>
<dbReference type="InterPro" id="IPR036457">
    <property type="entry name" value="PPM-type-like_dom_sf"/>
</dbReference>
<dbReference type="InterPro" id="IPR001932">
    <property type="entry name" value="PPM-type_phosphatase-like_dom"/>
</dbReference>
<dbReference type="PANTHER" id="PTHR13832">
    <property type="entry name" value="PROTEIN PHOSPHATASE 2C"/>
    <property type="match status" value="1"/>
</dbReference>
<dbReference type="PANTHER" id="PTHR13832:SF840">
    <property type="entry name" value="PROTEIN PHOSPHATASE 2C 60-RELATED"/>
    <property type="match status" value="1"/>
</dbReference>
<dbReference type="Pfam" id="PF00481">
    <property type="entry name" value="PP2C"/>
    <property type="match status" value="2"/>
</dbReference>
<dbReference type="SMART" id="SM00331">
    <property type="entry name" value="PP2C_SIG"/>
    <property type="match status" value="1"/>
</dbReference>
<dbReference type="SMART" id="SM00332">
    <property type="entry name" value="PP2Cc"/>
    <property type="match status" value="1"/>
</dbReference>
<dbReference type="SUPFAM" id="SSF81606">
    <property type="entry name" value="PP2C-like"/>
    <property type="match status" value="1"/>
</dbReference>
<dbReference type="PROSITE" id="PS01032">
    <property type="entry name" value="PPM_1"/>
    <property type="match status" value="1"/>
</dbReference>
<dbReference type="PROSITE" id="PS51746">
    <property type="entry name" value="PPM_2"/>
    <property type="match status" value="1"/>
</dbReference>